<sequence length="303" mass="32299">MEMSSLLERITDQIAPLRGSGEVADYIPALARADPDRFGIAVAEVDGGVHGAGDWEAPFSMQSISKVFTLAMVLAEGDDTLWRRVGREPSGNPFNSLVQLEHERGIPRNPFINAGALAVTDQLISLTGDAVGNLLEFLRTESANPALPIDDEVAISERAHADRNLALAHFMASYGNMRNPVDDVIDQYVRQCSIAMSCHDLAEAGLLLARHGVRRDGSGYLSRSQAKRINAIMLTCGTYDAAGEFAYHVGIPGKSGVGGGILAIVPGRCAVAVWSPGLDRRGNSVAGVAALDHFTTLTGWSVF</sequence>
<gene>
    <name evidence="1" type="primary">glsA</name>
    <name type="ordered locus">SACE_1670</name>
</gene>
<feature type="chain" id="PRO_1000048353" description="Glutaminase">
    <location>
        <begin position="1"/>
        <end position="303"/>
    </location>
</feature>
<feature type="binding site" evidence="1">
    <location>
        <position position="63"/>
    </location>
    <ligand>
        <name>substrate</name>
    </ligand>
</feature>
<feature type="binding site" evidence="1">
    <location>
        <position position="113"/>
    </location>
    <ligand>
        <name>substrate</name>
    </ligand>
</feature>
<feature type="binding site" evidence="1">
    <location>
        <position position="157"/>
    </location>
    <ligand>
        <name>substrate</name>
    </ligand>
</feature>
<feature type="binding site" evidence="1">
    <location>
        <position position="164"/>
    </location>
    <ligand>
        <name>substrate</name>
    </ligand>
</feature>
<feature type="binding site" evidence="1">
    <location>
        <position position="188"/>
    </location>
    <ligand>
        <name>substrate</name>
    </ligand>
</feature>
<feature type="binding site" evidence="1">
    <location>
        <position position="239"/>
    </location>
    <ligand>
        <name>substrate</name>
    </ligand>
</feature>
<feature type="binding site" evidence="1">
    <location>
        <position position="257"/>
    </location>
    <ligand>
        <name>substrate</name>
    </ligand>
</feature>
<proteinExistence type="inferred from homology"/>
<reference key="1">
    <citation type="journal article" date="2007" name="Nat. Biotechnol.">
        <title>Complete genome sequence of the erythromycin-producing bacterium Saccharopolyspora erythraea NRRL23338.</title>
        <authorList>
            <person name="Oliynyk M."/>
            <person name="Samborskyy M."/>
            <person name="Lester J.B."/>
            <person name="Mironenko T."/>
            <person name="Scott N."/>
            <person name="Dickens S."/>
            <person name="Haydock S.F."/>
            <person name="Leadlay P.F."/>
        </authorList>
    </citation>
    <scope>NUCLEOTIDE SEQUENCE [LARGE SCALE GENOMIC DNA]</scope>
    <source>
        <strain>ATCC 11635 / DSM 40517 / JCM 4748 / NBRC 13426 / NCIMB 8594 / NRRL 2338</strain>
    </source>
</reference>
<protein>
    <recommendedName>
        <fullName evidence="1">Glutaminase</fullName>
        <ecNumber evidence="1">3.5.1.2</ecNumber>
    </recommendedName>
</protein>
<dbReference type="EC" id="3.5.1.2" evidence="1"/>
<dbReference type="EMBL" id="AM420293">
    <property type="protein sequence ID" value="CAM00989.1"/>
    <property type="molecule type" value="Genomic_DNA"/>
</dbReference>
<dbReference type="RefSeq" id="WP_009943877.1">
    <property type="nucleotide sequence ID" value="NC_009142.1"/>
</dbReference>
<dbReference type="SMR" id="A4FAB4"/>
<dbReference type="STRING" id="405948.SACE_1670"/>
<dbReference type="KEGG" id="sen:SACE_1670"/>
<dbReference type="eggNOG" id="COG2066">
    <property type="taxonomic scope" value="Bacteria"/>
</dbReference>
<dbReference type="HOGENOM" id="CLU_027932_1_1_11"/>
<dbReference type="OrthoDB" id="9788822at2"/>
<dbReference type="Proteomes" id="UP000006728">
    <property type="component" value="Chromosome"/>
</dbReference>
<dbReference type="GO" id="GO:0004359">
    <property type="term" value="F:glutaminase activity"/>
    <property type="evidence" value="ECO:0007669"/>
    <property type="project" value="UniProtKB-UniRule"/>
</dbReference>
<dbReference type="GO" id="GO:0006537">
    <property type="term" value="P:glutamate biosynthetic process"/>
    <property type="evidence" value="ECO:0007669"/>
    <property type="project" value="TreeGrafter"/>
</dbReference>
<dbReference type="GO" id="GO:0006543">
    <property type="term" value="P:glutamine catabolic process"/>
    <property type="evidence" value="ECO:0007669"/>
    <property type="project" value="TreeGrafter"/>
</dbReference>
<dbReference type="FunFam" id="3.40.710.10:FF:000005">
    <property type="entry name" value="Glutaminase"/>
    <property type="match status" value="1"/>
</dbReference>
<dbReference type="Gene3D" id="3.40.710.10">
    <property type="entry name" value="DD-peptidase/beta-lactamase superfamily"/>
    <property type="match status" value="1"/>
</dbReference>
<dbReference type="HAMAP" id="MF_00313">
    <property type="entry name" value="Glutaminase"/>
    <property type="match status" value="1"/>
</dbReference>
<dbReference type="InterPro" id="IPR012338">
    <property type="entry name" value="Beta-lactam/transpept-like"/>
</dbReference>
<dbReference type="InterPro" id="IPR015868">
    <property type="entry name" value="Glutaminase"/>
</dbReference>
<dbReference type="NCBIfam" id="TIGR03814">
    <property type="entry name" value="Gln_ase"/>
    <property type="match status" value="1"/>
</dbReference>
<dbReference type="NCBIfam" id="NF002133">
    <property type="entry name" value="PRK00971.1-2"/>
    <property type="match status" value="1"/>
</dbReference>
<dbReference type="PANTHER" id="PTHR12544">
    <property type="entry name" value="GLUTAMINASE"/>
    <property type="match status" value="1"/>
</dbReference>
<dbReference type="PANTHER" id="PTHR12544:SF29">
    <property type="entry name" value="GLUTAMINASE"/>
    <property type="match status" value="1"/>
</dbReference>
<dbReference type="Pfam" id="PF04960">
    <property type="entry name" value="Glutaminase"/>
    <property type="match status" value="1"/>
</dbReference>
<dbReference type="SUPFAM" id="SSF56601">
    <property type="entry name" value="beta-lactamase/transpeptidase-like"/>
    <property type="match status" value="1"/>
</dbReference>
<accession>A4FAB4</accession>
<comment type="catalytic activity">
    <reaction evidence="1">
        <text>L-glutamine + H2O = L-glutamate + NH4(+)</text>
        <dbReference type="Rhea" id="RHEA:15889"/>
        <dbReference type="ChEBI" id="CHEBI:15377"/>
        <dbReference type="ChEBI" id="CHEBI:28938"/>
        <dbReference type="ChEBI" id="CHEBI:29985"/>
        <dbReference type="ChEBI" id="CHEBI:58359"/>
        <dbReference type="EC" id="3.5.1.2"/>
    </reaction>
</comment>
<comment type="subunit">
    <text evidence="1">Homotetramer.</text>
</comment>
<comment type="similarity">
    <text evidence="1">Belongs to the glutaminase family.</text>
</comment>
<organism>
    <name type="scientific">Saccharopolyspora erythraea (strain ATCC 11635 / DSM 40517 / JCM 4748 / NBRC 13426 / NCIMB 8594 / NRRL 2338)</name>
    <dbReference type="NCBI Taxonomy" id="405948"/>
    <lineage>
        <taxon>Bacteria</taxon>
        <taxon>Bacillati</taxon>
        <taxon>Actinomycetota</taxon>
        <taxon>Actinomycetes</taxon>
        <taxon>Pseudonocardiales</taxon>
        <taxon>Pseudonocardiaceae</taxon>
        <taxon>Saccharopolyspora</taxon>
    </lineage>
</organism>
<keyword id="KW-0378">Hydrolase</keyword>
<keyword id="KW-1185">Reference proteome</keyword>
<evidence type="ECO:0000255" key="1">
    <source>
        <dbReference type="HAMAP-Rule" id="MF_00313"/>
    </source>
</evidence>
<name>GLSA_SACEN</name>